<name>ARGC_ECOLI</name>
<accession>P11446</accession>
<accession>Q2M8Q3</accession>
<gene>
    <name evidence="1" type="primary">argC</name>
    <name type="ordered locus">b3958</name>
    <name type="ordered locus">JW3930</name>
</gene>
<proteinExistence type="evidence at protein level"/>
<reference key="1">
    <citation type="journal article" date="1988" name="Gene">
        <title>Nucleotide sequence of Escherichia coli argB and argC genes: comparison of N-acetylglutamate kinase and N-acetylglutamate-gamma-semialdehyde dehydrogenase with homologous and analogous enzymes.</title>
        <authorList>
            <person name="Parsot C."/>
            <person name="Boyen A."/>
            <person name="Cohen G.N."/>
            <person name="Glansdorff N."/>
        </authorList>
    </citation>
    <scope>NUCLEOTIDE SEQUENCE [GENOMIC DNA]</scope>
</reference>
<reference key="2">
    <citation type="journal article" date="1993" name="Nucleic Acids Res.">
        <title>Analysis of the Escherichia coli genome. IV. DNA sequence of the region from 89.2 to 92.8 minutes.</title>
        <authorList>
            <person name="Blattner F.R."/>
            <person name="Burland V.D."/>
            <person name="Plunkett G. III"/>
            <person name="Sofia H.J."/>
            <person name="Daniels D.L."/>
        </authorList>
    </citation>
    <scope>NUCLEOTIDE SEQUENCE [LARGE SCALE GENOMIC DNA]</scope>
    <source>
        <strain>K12 / MG1655 / ATCC 47076</strain>
    </source>
</reference>
<reference key="3">
    <citation type="journal article" date="1997" name="Science">
        <title>The complete genome sequence of Escherichia coli K-12.</title>
        <authorList>
            <person name="Blattner F.R."/>
            <person name="Plunkett G. III"/>
            <person name="Bloch C.A."/>
            <person name="Perna N.T."/>
            <person name="Burland V."/>
            <person name="Riley M."/>
            <person name="Collado-Vides J."/>
            <person name="Glasner J.D."/>
            <person name="Rode C.K."/>
            <person name="Mayhew G.F."/>
            <person name="Gregor J."/>
            <person name="Davis N.W."/>
            <person name="Kirkpatrick H.A."/>
            <person name="Goeden M.A."/>
            <person name="Rose D.J."/>
            <person name="Mau B."/>
            <person name="Shao Y."/>
        </authorList>
    </citation>
    <scope>NUCLEOTIDE SEQUENCE [LARGE SCALE GENOMIC DNA]</scope>
    <source>
        <strain>K12 / MG1655 / ATCC 47076</strain>
    </source>
</reference>
<reference key="4">
    <citation type="journal article" date="2006" name="Mol. Syst. Biol.">
        <title>Highly accurate genome sequences of Escherichia coli K-12 strains MG1655 and W3110.</title>
        <authorList>
            <person name="Hayashi K."/>
            <person name="Morooka N."/>
            <person name="Yamamoto Y."/>
            <person name="Fujita K."/>
            <person name="Isono K."/>
            <person name="Choi S."/>
            <person name="Ohtsubo E."/>
            <person name="Baba T."/>
            <person name="Wanner B.L."/>
            <person name="Mori H."/>
            <person name="Horiuchi T."/>
        </authorList>
    </citation>
    <scope>NUCLEOTIDE SEQUENCE [LARGE SCALE GENOMIC DNA]</scope>
    <source>
        <strain>K12 / W3110 / ATCC 27325 / DSM 5911</strain>
    </source>
</reference>
<reference key="5">
    <citation type="journal article" date="1982" name="Nucleic Acids Res.">
        <title>The regulatory region of the divergent argECBH operon in Escherichia coli K-12.</title>
        <authorList>
            <person name="Piette J."/>
            <person name="Cunin R."/>
            <person name="Boyen A."/>
            <person name="Charlier D.R.M."/>
            <person name="Crabeel M."/>
            <person name="van Vliet F."/>
            <person name="Glansdorff N."/>
            <person name="Squires C."/>
            <person name="Squires C.L."/>
        </authorList>
    </citation>
    <scope>NUCLEOTIDE SEQUENCE [GENOMIC DNA] OF 1-48</scope>
    <source>
        <strain>K12</strain>
    </source>
</reference>
<reference key="6">
    <citation type="journal article" date="1992" name="J. Bacteriol.">
        <title>Structural and biochemical characterization of the Escherichia coli argE gene product.</title>
        <authorList>
            <person name="Meinnel T."/>
            <person name="Schmitt E."/>
            <person name="Mechulam Y."/>
            <person name="Blanquet S."/>
        </authorList>
    </citation>
    <scope>NUCLEOTIDE SEQUENCE [GENOMIC DNA] OF 1-19</scope>
    <source>
        <strain>K12</strain>
    </source>
</reference>
<reference key="7">
    <citation type="journal article" date="1962" name="Biochem. Biophys. Res. Commun.">
        <title>N-Acetyl-gamma-Ilutamokinase and N-acetylglutamic gamma-semialdehyde dehydrogenase: repressible enzymes of arginine synthesis in Escherichia coli.</title>
        <authorList>
            <person name="Baich A."/>
            <person name="Vogel H.J."/>
        </authorList>
    </citation>
    <scope>FUNCTION</scope>
    <scope>CATALYTIC ACTIVITY</scope>
    <scope>PATHWAY</scope>
    <source>
        <strain>W / ATCC 11105 / DSM 1900</strain>
    </source>
</reference>
<protein>
    <recommendedName>
        <fullName evidence="1 4">N-acetyl-gamma-glutamyl-phosphate reductase</fullName>
        <shortName evidence="1 4">AGPR</shortName>
        <ecNumber evidence="1 2">1.2.1.38</ecNumber>
    </recommendedName>
    <alternativeName>
        <fullName evidence="1 3">N-acetyl-glutamate semialdehyde dehydrogenase</fullName>
        <shortName evidence="1 3">NAGSA dehydrogenase</shortName>
    </alternativeName>
</protein>
<dbReference type="EC" id="1.2.1.38" evidence="1 2"/>
<dbReference type="EMBL" id="M21446">
    <property type="protein sequence ID" value="AAA23477.1"/>
    <property type="molecule type" value="Genomic_DNA"/>
</dbReference>
<dbReference type="EMBL" id="U00006">
    <property type="protein sequence ID" value="AAC43064.1"/>
    <property type="molecule type" value="Genomic_DNA"/>
</dbReference>
<dbReference type="EMBL" id="U00096">
    <property type="protein sequence ID" value="AAC76940.1"/>
    <property type="molecule type" value="Genomic_DNA"/>
</dbReference>
<dbReference type="EMBL" id="AP009048">
    <property type="protein sequence ID" value="BAE77353.1"/>
    <property type="molecule type" value="Genomic_DNA"/>
</dbReference>
<dbReference type="EMBL" id="AH005258">
    <property type="protein sequence ID" value="AAB59146.1"/>
    <property type="molecule type" value="Genomic_DNA"/>
</dbReference>
<dbReference type="EMBL" id="X55417">
    <property type="status" value="NOT_ANNOTATED_CDS"/>
    <property type="molecule type" value="Genomic_DNA"/>
</dbReference>
<dbReference type="PIR" id="JT0332">
    <property type="entry name" value="RDECEP"/>
</dbReference>
<dbReference type="RefSeq" id="NP_418393.1">
    <property type="nucleotide sequence ID" value="NC_000913.3"/>
</dbReference>
<dbReference type="RefSeq" id="WP_000935370.1">
    <property type="nucleotide sequence ID" value="NZ_STEB01000037.1"/>
</dbReference>
<dbReference type="SMR" id="P11446"/>
<dbReference type="BioGRID" id="4262190">
    <property type="interactions" value="6"/>
</dbReference>
<dbReference type="BioGRID" id="852751">
    <property type="interactions" value="1"/>
</dbReference>
<dbReference type="FunCoup" id="P11446">
    <property type="interactions" value="406"/>
</dbReference>
<dbReference type="IntAct" id="P11446">
    <property type="interactions" value="1"/>
</dbReference>
<dbReference type="STRING" id="511145.b3958"/>
<dbReference type="PaxDb" id="511145-b3958"/>
<dbReference type="EnsemblBacteria" id="AAC76940">
    <property type="protein sequence ID" value="AAC76940"/>
    <property type="gene ID" value="b3958"/>
</dbReference>
<dbReference type="GeneID" id="75203212"/>
<dbReference type="GeneID" id="948455"/>
<dbReference type="KEGG" id="ecj:JW3930"/>
<dbReference type="KEGG" id="eco:b3958"/>
<dbReference type="KEGG" id="ecoc:C3026_21390"/>
<dbReference type="PATRIC" id="fig|1411691.4.peg.2747"/>
<dbReference type="EchoBASE" id="EB0063"/>
<dbReference type="eggNOG" id="COG0002">
    <property type="taxonomic scope" value="Bacteria"/>
</dbReference>
<dbReference type="HOGENOM" id="CLU_006384_0_1_6"/>
<dbReference type="InParanoid" id="P11446"/>
<dbReference type="OMA" id="PHLTPMI"/>
<dbReference type="OrthoDB" id="9801289at2"/>
<dbReference type="PhylomeDB" id="P11446"/>
<dbReference type="BioCyc" id="EcoCyc:N-ACETYLGLUTPREDUCT-MONOMER"/>
<dbReference type="BioCyc" id="MetaCyc:N-ACETYLGLUTPREDUCT-MONOMER"/>
<dbReference type="BRENDA" id="1.2.1.38">
    <property type="organism ID" value="2026"/>
</dbReference>
<dbReference type="UniPathway" id="UPA00068">
    <property type="reaction ID" value="UER00108"/>
</dbReference>
<dbReference type="PRO" id="PR:P11446"/>
<dbReference type="Proteomes" id="UP000000625">
    <property type="component" value="Chromosome"/>
</dbReference>
<dbReference type="GO" id="GO:0005737">
    <property type="term" value="C:cytoplasm"/>
    <property type="evidence" value="ECO:0007669"/>
    <property type="project" value="UniProtKB-SubCell"/>
</dbReference>
<dbReference type="GO" id="GO:0003942">
    <property type="term" value="F:N-acetyl-gamma-glutamyl-phosphate reductase activity"/>
    <property type="evidence" value="ECO:0000314"/>
    <property type="project" value="EcoCyc"/>
</dbReference>
<dbReference type="GO" id="GO:0051287">
    <property type="term" value="F:NAD binding"/>
    <property type="evidence" value="ECO:0007669"/>
    <property type="project" value="InterPro"/>
</dbReference>
<dbReference type="GO" id="GO:0070401">
    <property type="term" value="F:NADP+ binding"/>
    <property type="evidence" value="ECO:0007669"/>
    <property type="project" value="InterPro"/>
</dbReference>
<dbReference type="GO" id="GO:0006526">
    <property type="term" value="P:L-arginine biosynthetic process"/>
    <property type="evidence" value="ECO:0000314"/>
    <property type="project" value="EcoCyc"/>
</dbReference>
<dbReference type="CDD" id="cd23934">
    <property type="entry name" value="AGPR_1_C"/>
    <property type="match status" value="1"/>
</dbReference>
<dbReference type="CDD" id="cd17895">
    <property type="entry name" value="AGPR_1_N"/>
    <property type="match status" value="1"/>
</dbReference>
<dbReference type="FunFam" id="3.30.360.10:FF:000014">
    <property type="entry name" value="N-acetyl-gamma-glutamyl-phosphate reductase"/>
    <property type="match status" value="1"/>
</dbReference>
<dbReference type="FunFam" id="3.40.50.720:FF:000117">
    <property type="entry name" value="N-acetyl-gamma-glutamyl-phosphate reductase"/>
    <property type="match status" value="1"/>
</dbReference>
<dbReference type="Gene3D" id="3.30.360.10">
    <property type="entry name" value="Dihydrodipicolinate Reductase, domain 2"/>
    <property type="match status" value="1"/>
</dbReference>
<dbReference type="Gene3D" id="3.40.50.720">
    <property type="entry name" value="NAD(P)-binding Rossmann-like Domain"/>
    <property type="match status" value="1"/>
</dbReference>
<dbReference type="HAMAP" id="MF_00150">
    <property type="entry name" value="ArgC_type1"/>
    <property type="match status" value="1"/>
</dbReference>
<dbReference type="InterPro" id="IPR023013">
    <property type="entry name" value="AGPR_AS"/>
</dbReference>
<dbReference type="InterPro" id="IPR000706">
    <property type="entry name" value="AGPR_type-1"/>
</dbReference>
<dbReference type="InterPro" id="IPR036291">
    <property type="entry name" value="NAD(P)-bd_dom_sf"/>
</dbReference>
<dbReference type="InterPro" id="IPR050085">
    <property type="entry name" value="NAGSA_dehydrogenase"/>
</dbReference>
<dbReference type="InterPro" id="IPR000534">
    <property type="entry name" value="Semialdehyde_DH_NAD-bd"/>
</dbReference>
<dbReference type="NCBIfam" id="TIGR01850">
    <property type="entry name" value="argC"/>
    <property type="match status" value="1"/>
</dbReference>
<dbReference type="PANTHER" id="PTHR32338:SF10">
    <property type="entry name" value="N-ACETYL-GAMMA-GLUTAMYL-PHOSPHATE REDUCTASE, CHLOROPLASTIC-RELATED"/>
    <property type="match status" value="1"/>
</dbReference>
<dbReference type="PANTHER" id="PTHR32338">
    <property type="entry name" value="N-ACETYL-GAMMA-GLUTAMYL-PHOSPHATE REDUCTASE, CHLOROPLASTIC-RELATED-RELATED"/>
    <property type="match status" value="1"/>
</dbReference>
<dbReference type="Pfam" id="PF01118">
    <property type="entry name" value="Semialdhyde_dh"/>
    <property type="match status" value="1"/>
</dbReference>
<dbReference type="Pfam" id="PF22698">
    <property type="entry name" value="Semialdhyde_dhC_1"/>
    <property type="match status" value="1"/>
</dbReference>
<dbReference type="SMART" id="SM00859">
    <property type="entry name" value="Semialdhyde_dh"/>
    <property type="match status" value="1"/>
</dbReference>
<dbReference type="SUPFAM" id="SSF55347">
    <property type="entry name" value="Glyceraldehyde-3-phosphate dehydrogenase-like, C-terminal domain"/>
    <property type="match status" value="1"/>
</dbReference>
<dbReference type="SUPFAM" id="SSF51735">
    <property type="entry name" value="NAD(P)-binding Rossmann-fold domains"/>
    <property type="match status" value="1"/>
</dbReference>
<dbReference type="PROSITE" id="PS01224">
    <property type="entry name" value="ARGC"/>
    <property type="match status" value="1"/>
</dbReference>
<keyword id="KW-0028">Amino-acid biosynthesis</keyword>
<keyword id="KW-0055">Arginine biosynthesis</keyword>
<keyword id="KW-0963">Cytoplasm</keyword>
<keyword id="KW-0521">NADP</keyword>
<keyword id="KW-0560">Oxidoreductase</keyword>
<keyword id="KW-1185">Reference proteome</keyword>
<feature type="chain" id="PRO_0000112401" description="N-acetyl-gamma-glutamyl-phosphate reductase">
    <location>
        <begin position="1"/>
        <end position="334"/>
    </location>
</feature>
<feature type="active site" evidence="1">
    <location>
        <position position="154"/>
    </location>
</feature>
<comment type="function">
    <text evidence="1 2">Catalyzes the NADPH-dependent reduction of N-acetyl-5-glutamyl phosphate to yield N-acetyl-L-glutamate 5-semialdehyde.</text>
</comment>
<comment type="catalytic activity">
    <reaction evidence="1 2">
        <text>N-acetyl-L-glutamate 5-semialdehyde + phosphate + NADP(+) = N-acetyl-L-glutamyl 5-phosphate + NADPH + H(+)</text>
        <dbReference type="Rhea" id="RHEA:21588"/>
        <dbReference type="ChEBI" id="CHEBI:15378"/>
        <dbReference type="ChEBI" id="CHEBI:29123"/>
        <dbReference type="ChEBI" id="CHEBI:43474"/>
        <dbReference type="ChEBI" id="CHEBI:57783"/>
        <dbReference type="ChEBI" id="CHEBI:57936"/>
        <dbReference type="ChEBI" id="CHEBI:58349"/>
        <dbReference type="EC" id="1.2.1.38"/>
    </reaction>
</comment>
<comment type="pathway">
    <text evidence="1 5">Amino-acid biosynthesis; L-arginine biosynthesis; N(2)-acetyl-L-ornithine from L-glutamate: step 3/4.</text>
</comment>
<comment type="subcellular location">
    <subcellularLocation>
        <location evidence="1">Cytoplasm</location>
    </subcellularLocation>
</comment>
<comment type="similarity">
    <text evidence="1 4">Belongs to the NAGSA dehydrogenase family. Type 1 subfamily.</text>
</comment>
<organism>
    <name type="scientific">Escherichia coli (strain K12)</name>
    <dbReference type="NCBI Taxonomy" id="83333"/>
    <lineage>
        <taxon>Bacteria</taxon>
        <taxon>Pseudomonadati</taxon>
        <taxon>Pseudomonadota</taxon>
        <taxon>Gammaproteobacteria</taxon>
        <taxon>Enterobacterales</taxon>
        <taxon>Enterobacteriaceae</taxon>
        <taxon>Escherichia</taxon>
    </lineage>
</organism>
<sequence>MLNTLIVGASGYAGAELVTYVNRHPHMNITALTVSAQSNDAGKLISDLHPQLKGIVDLPLQPMSDISEFSPGVDVVFLATAHEVSHDLAPQFLEAGCVVFDLSGAFRVNDATFYEKYYGFTHQYPELLEQAAYGLAEWCGNKLKEANLIAVPGCYPTAAQLALKPLIDADLLDLNQWPVINATSGVSGAGRKAAISNSFCEVSLQPYGVFTHRHQPEIATHLGADVIFTPHLGNFPRGILETITCRLKSGVTQAQVAQVLQQAYAHKPLVRLYDKGVPALKNVVGLPFCDIGFAVQGEHLIIVATEDNLLKGAAAQAVQCANIRFGYAETQSLI</sequence>
<evidence type="ECO:0000255" key="1">
    <source>
        <dbReference type="HAMAP-Rule" id="MF_00150"/>
    </source>
</evidence>
<evidence type="ECO:0000269" key="2">
    <source>
    </source>
</evidence>
<evidence type="ECO:0000303" key="3">
    <source>
    </source>
</evidence>
<evidence type="ECO:0000305" key="4"/>
<evidence type="ECO:0000305" key="5">
    <source>
    </source>
</evidence>